<feature type="chain" id="PRO_0000368977" description="ATP synthase subunit b, chloroplastic">
    <location>
        <begin position="1"/>
        <end position="183"/>
    </location>
</feature>
<feature type="transmembrane region" description="Helical" evidence="1">
    <location>
        <begin position="27"/>
        <end position="49"/>
    </location>
</feature>
<protein>
    <recommendedName>
        <fullName evidence="1">ATP synthase subunit b, chloroplastic</fullName>
    </recommendedName>
    <alternativeName>
        <fullName evidence="1">ATP synthase F(0) sector subunit b</fullName>
    </alternativeName>
    <alternativeName>
        <fullName evidence="1">ATPase subunit I</fullName>
    </alternativeName>
</protein>
<organism>
    <name type="scientific">Ranunculus macranthus</name>
    <name type="common">Large buttercup</name>
    <dbReference type="NCBI Taxonomy" id="334596"/>
    <lineage>
        <taxon>Eukaryota</taxon>
        <taxon>Viridiplantae</taxon>
        <taxon>Streptophyta</taxon>
        <taxon>Embryophyta</taxon>
        <taxon>Tracheophyta</taxon>
        <taxon>Spermatophyta</taxon>
        <taxon>Magnoliopsida</taxon>
        <taxon>Ranunculales</taxon>
        <taxon>Ranunculaceae</taxon>
        <taxon>Ranunculoideae</taxon>
        <taxon>Ranunculeae</taxon>
        <taxon>Ranunculus</taxon>
    </lineage>
</organism>
<gene>
    <name evidence="1" type="primary">atpF</name>
</gene>
<evidence type="ECO:0000255" key="1">
    <source>
        <dbReference type="HAMAP-Rule" id="MF_01398"/>
    </source>
</evidence>
<keyword id="KW-0066">ATP synthesis</keyword>
<keyword id="KW-0138">CF(0)</keyword>
<keyword id="KW-0150">Chloroplast</keyword>
<keyword id="KW-0375">Hydrogen ion transport</keyword>
<keyword id="KW-0406">Ion transport</keyword>
<keyword id="KW-0472">Membrane</keyword>
<keyword id="KW-0934">Plastid</keyword>
<keyword id="KW-0793">Thylakoid</keyword>
<keyword id="KW-0812">Transmembrane</keyword>
<keyword id="KW-1133">Transmembrane helix</keyword>
<keyword id="KW-0813">Transport</keyword>
<accession>A1XGM4</accession>
<comment type="function">
    <text evidence="1">F(1)F(0) ATP synthase produces ATP from ADP in the presence of a proton or sodium gradient. F-type ATPases consist of two structural domains, F(1) containing the extramembraneous catalytic core and F(0) containing the membrane proton channel, linked together by a central stalk and a peripheral stalk. During catalysis, ATP synthesis in the catalytic domain of F(1) is coupled via a rotary mechanism of the central stalk subunits to proton translocation.</text>
</comment>
<comment type="function">
    <text evidence="1">Component of the F(0) channel, it forms part of the peripheral stalk, linking F(1) to F(0).</text>
</comment>
<comment type="subunit">
    <text evidence="1">F-type ATPases have 2 components, F(1) - the catalytic core - and F(0) - the membrane proton channel. F(1) has five subunits: alpha(3), beta(3), gamma(1), delta(1), epsilon(1). F(0) has four main subunits: a(1), b(1), b'(1) and c(10-14). The alpha and beta chains form an alternating ring which encloses part of the gamma chain. F(1) is attached to F(0) by a central stalk formed by the gamma and epsilon chains, while a peripheral stalk is formed by the delta, b and b' chains.</text>
</comment>
<comment type="subcellular location">
    <subcellularLocation>
        <location evidence="1">Plastid</location>
        <location evidence="1">Chloroplast thylakoid membrane</location>
        <topology evidence="1">Single-pass membrane protein</topology>
    </subcellularLocation>
</comment>
<comment type="miscellaneous">
    <text>In plastids the F-type ATPase is also known as CF(1)CF(0).</text>
</comment>
<comment type="similarity">
    <text evidence="1">Belongs to the ATPase B chain family.</text>
</comment>
<geneLocation type="chloroplast"/>
<name>ATPF_RANMC</name>
<reference key="1">
    <citation type="journal article" date="2007" name="BMC Genomics">
        <title>Comparative chloroplast genomics: analyses including new sequences from the angiosperms Nuphar advena and Ranunculus macranthus.</title>
        <authorList>
            <person name="Raubeson L.A."/>
            <person name="Peery R."/>
            <person name="Chumley T.W."/>
            <person name="Dziubek C."/>
            <person name="Fourcade H.M."/>
            <person name="Boore J.L."/>
            <person name="Jansen R.K."/>
        </authorList>
    </citation>
    <scope>NUCLEOTIDE SEQUENCE [LARGE SCALE GENOMIC DNA]</scope>
</reference>
<sequence length="183" mass="20679">MKKVTDSFVSLGHWPSAGSFGFNTDILATNPINLSVVLGVLIFFGKGVLSDLLDNRKQRILSTIRNSEELRGGAIEKLEKAKARLRKVKAEADEFRTNGYSEIEREKCNLINSTYQNLERLENYKNETIQFEQQRAINQVRQRIFQQALQGALGTLNSCLNNELHLRTISANIGMFGAMKEIT</sequence>
<dbReference type="EMBL" id="DQ359689">
    <property type="protein sequence ID" value="ABC70742.1"/>
    <property type="molecule type" value="Genomic_DNA"/>
</dbReference>
<dbReference type="RefSeq" id="YP_001004172.1">
    <property type="nucleotide sequence ID" value="NC_008796.1"/>
</dbReference>
<dbReference type="SMR" id="A1XGM4"/>
<dbReference type="GeneID" id="4712165"/>
<dbReference type="GO" id="GO:0009535">
    <property type="term" value="C:chloroplast thylakoid membrane"/>
    <property type="evidence" value="ECO:0007669"/>
    <property type="project" value="UniProtKB-SubCell"/>
</dbReference>
<dbReference type="GO" id="GO:0045259">
    <property type="term" value="C:proton-transporting ATP synthase complex"/>
    <property type="evidence" value="ECO:0007669"/>
    <property type="project" value="UniProtKB-KW"/>
</dbReference>
<dbReference type="GO" id="GO:0046933">
    <property type="term" value="F:proton-transporting ATP synthase activity, rotational mechanism"/>
    <property type="evidence" value="ECO:0007669"/>
    <property type="project" value="UniProtKB-UniRule"/>
</dbReference>
<dbReference type="CDD" id="cd06503">
    <property type="entry name" value="ATP-synt_Fo_b"/>
    <property type="match status" value="1"/>
</dbReference>
<dbReference type="HAMAP" id="MF_01398">
    <property type="entry name" value="ATP_synth_b_bprime"/>
    <property type="match status" value="1"/>
</dbReference>
<dbReference type="InterPro" id="IPR002146">
    <property type="entry name" value="ATP_synth_b/b'su_bac/chlpt"/>
</dbReference>
<dbReference type="PANTHER" id="PTHR34264">
    <property type="entry name" value="ATP SYNTHASE SUBUNIT B, CHLOROPLASTIC"/>
    <property type="match status" value="1"/>
</dbReference>
<dbReference type="PANTHER" id="PTHR34264:SF3">
    <property type="entry name" value="ATP SYNTHASE SUBUNIT B, CHLOROPLASTIC"/>
    <property type="match status" value="1"/>
</dbReference>
<dbReference type="Pfam" id="PF00430">
    <property type="entry name" value="ATP-synt_B"/>
    <property type="match status" value="1"/>
</dbReference>
<proteinExistence type="inferred from homology"/>